<keyword id="KW-0186">Copper</keyword>
<keyword id="KW-0903">Direct protein sequencing</keyword>
<keyword id="KW-0325">Glycoprotein</keyword>
<keyword id="KW-0378">Hydrolase</keyword>
<keyword id="KW-0964">Secreted</keyword>
<keyword id="KW-0732">Signal</keyword>
<accession>Q12546</accession>
<feature type="signal peptide" evidence="3 4">
    <location>
        <begin position="1"/>
        <end position="22"/>
    </location>
</feature>
<feature type="chain" id="PRO_0000023997" description="Acid phosphatase">
    <location>
        <begin position="23"/>
        <end position="605"/>
    </location>
</feature>
<feature type="propeptide" id="PRO_0000023998">
    <location>
        <begin position="606"/>
        <end position="614"/>
    </location>
</feature>
<feature type="domain" description="Fibronectin type-III" evidence="2">
    <location>
        <begin position="80"/>
        <end position="176"/>
    </location>
</feature>
<feature type="glycosylation site" description="N-linked (GlcNAc...) asparagine" evidence="1">
    <location>
        <position position="110"/>
    </location>
</feature>
<feature type="glycosylation site" description="N-linked (GlcNAc...) asparagine" evidence="1">
    <location>
        <position position="161"/>
    </location>
</feature>
<feature type="glycosylation site" description="N-linked (GlcNAc...) asparagine" evidence="1">
    <location>
        <position position="242"/>
    </location>
</feature>
<feature type="glycosylation site" description="N-linked (GlcNAc...) asparagine" evidence="1">
    <location>
        <position position="295"/>
    </location>
</feature>
<feature type="glycosylation site" description="N-linked (GlcNAc...) asparagine" evidence="1">
    <location>
        <position position="333"/>
    </location>
</feature>
<feature type="glycosylation site" description="N-linked (GlcNAc...) asparagine" evidence="1">
    <location>
        <position position="340"/>
    </location>
</feature>
<feature type="glycosylation site" description="N-linked (GlcNAc...) asparagine" evidence="1">
    <location>
        <position position="352"/>
    </location>
</feature>
<feature type="glycosylation site" description="N-linked (GlcNAc...) asparagine" evidence="1">
    <location>
        <position position="408"/>
    </location>
</feature>
<feature type="glycosylation site" description="N-linked (GlcNAc...) asparagine" evidence="1">
    <location>
        <position position="429"/>
    </location>
</feature>
<feature type="glycosylation site" description="N-linked (GlcNAc...) asparagine" evidence="1">
    <location>
        <position position="512"/>
    </location>
</feature>
<feature type="glycosylation site" description="N-linked (GlcNAc...) asparagine" evidence="1">
    <location>
        <position position="523"/>
    </location>
</feature>
<feature type="glycosylation site" description="N-linked (GlcNAc...) asparagine" evidence="1">
    <location>
        <position position="559"/>
    </location>
</feature>
<feature type="glycosylation site" description="N-linked (GlcNAc...) asparagine" evidence="1">
    <location>
        <position position="578"/>
    </location>
</feature>
<proteinExistence type="evidence at protein level"/>
<reference key="1">
    <citation type="journal article" date="1995" name="Gene">
        <title>The Aspergillus niger (ficuum) aphA gene encodes a pH 6.0-optimum acid phosphatase.</title>
        <authorList>
            <person name="Mullaney E.J."/>
            <person name="Daly C.B."/>
            <person name="Ehrlich K.C."/>
            <person name="Ullah A.H.J."/>
        </authorList>
    </citation>
    <scope>NUCLEOTIDE SEQUENCE [GENOMIC DNA]</scope>
    <source>
        <strain>ATCC 66876 / DSM 932 / SRRC 265 / NRRL 3135</strain>
    </source>
</reference>
<reference key="2">
    <citation type="journal article" date="1994" name="Biochem. Biophys. Res. Commun.">
        <title>The complete primary structure elucidation of Aspergillus ficuum (niger), pH 6.0, optimum acid phosphatase by Edman degradation.</title>
        <authorList>
            <person name="Ullah A.H.J."/>
            <person name="Mullaney E.M."/>
            <person name="Dischinger H.C. Jr."/>
        </authorList>
    </citation>
    <scope>PROTEIN SEQUENCE OF 23-605</scope>
    <source>
        <strain>ATCC 66876 / DSM 932 / SRRC 265 / NRRL 3135</strain>
    </source>
</reference>
<reference key="3">
    <citation type="journal article" date="1988" name="Prep. Biochem.">
        <title>Aspergillus ficuum extracellular pH 6.0 optimum acid phosphatase: purification, N-terminal amino acid sequence, and biochemical characterization.</title>
        <authorList>
            <person name="Ullah A.H.J."/>
            <person name="Cummins B.J."/>
        </authorList>
    </citation>
    <scope>PROTEIN SEQUENCE OF 23-56</scope>
    <scope>CHARACTERIZATION</scope>
    <source>
        <strain>ATCC 66876 / DSM 932 / SRRC 265 / NRRL 3135</strain>
    </source>
</reference>
<comment type="catalytic activity">
    <reaction>
        <text>a phosphate monoester + H2O = an alcohol + phosphate</text>
        <dbReference type="Rhea" id="RHEA:15017"/>
        <dbReference type="ChEBI" id="CHEBI:15377"/>
        <dbReference type="ChEBI" id="CHEBI:30879"/>
        <dbReference type="ChEBI" id="CHEBI:43474"/>
        <dbReference type="ChEBI" id="CHEBI:67140"/>
        <dbReference type="EC" id="3.1.3.2"/>
    </reaction>
</comment>
<comment type="cofactor">
    <cofactor evidence="5">
        <name>Cu cation</name>
        <dbReference type="ChEBI" id="CHEBI:23378"/>
    </cofactor>
</comment>
<comment type="activity regulation">
    <text>Competitively inhibited by phosphomycin and inorganic orthophosphate.</text>
</comment>
<comment type="biophysicochemical properties">
    <phDependence>
        <text>Optimum pH is 6. Inactive above pH 6.7.</text>
    </phDependence>
    <temperatureDependence>
        <text>Optimum temperature is 63 degrees Celsius.</text>
    </temperatureDependence>
</comment>
<comment type="subunit">
    <text>Monomer.</text>
</comment>
<comment type="subcellular location">
    <subcellularLocation>
        <location>Secreted</location>
    </subcellularLocation>
</comment>
<comment type="PTM">
    <text>Glycosylated; probably with N-linked high-mannose oligosaccharides.</text>
</comment>
<dbReference type="EC" id="3.1.3.2"/>
<dbReference type="EMBL" id="U18553">
    <property type="protein sequence ID" value="AAA91632.1"/>
    <property type="molecule type" value="Genomic_DNA"/>
</dbReference>
<dbReference type="PIR" id="JC2545">
    <property type="entry name" value="JC2545"/>
</dbReference>
<dbReference type="SMR" id="Q12546"/>
<dbReference type="GlyCosmos" id="Q12546">
    <property type="glycosylation" value="13 sites, No reported glycans"/>
</dbReference>
<dbReference type="GO" id="GO:0005576">
    <property type="term" value="C:extracellular region"/>
    <property type="evidence" value="ECO:0007669"/>
    <property type="project" value="UniProtKB-SubCell"/>
</dbReference>
<dbReference type="GO" id="GO:0003993">
    <property type="term" value="F:acid phosphatase activity"/>
    <property type="evidence" value="ECO:0007669"/>
    <property type="project" value="UniProtKB-EC"/>
</dbReference>
<dbReference type="GO" id="GO:0046872">
    <property type="term" value="F:metal ion binding"/>
    <property type="evidence" value="ECO:0007669"/>
    <property type="project" value="InterPro"/>
</dbReference>
<dbReference type="CDD" id="cd00063">
    <property type="entry name" value="FN3"/>
    <property type="match status" value="1"/>
</dbReference>
<dbReference type="CDD" id="cd00839">
    <property type="entry name" value="MPP_PAPs"/>
    <property type="match status" value="1"/>
</dbReference>
<dbReference type="Gene3D" id="3.60.21.10">
    <property type="match status" value="1"/>
</dbReference>
<dbReference type="Gene3D" id="2.60.40.380">
    <property type="entry name" value="Purple acid phosphatase-like, N-terminal"/>
    <property type="match status" value="1"/>
</dbReference>
<dbReference type="InterPro" id="IPR014390">
    <property type="entry name" value="Acid_Pase_Asper"/>
</dbReference>
<dbReference type="InterPro" id="IPR004843">
    <property type="entry name" value="Calcineurin-like_PHP_ApaH"/>
</dbReference>
<dbReference type="InterPro" id="IPR003961">
    <property type="entry name" value="FN3_dom"/>
</dbReference>
<dbReference type="InterPro" id="IPR029052">
    <property type="entry name" value="Metallo-depent_PP-like"/>
</dbReference>
<dbReference type="InterPro" id="IPR041792">
    <property type="entry name" value="MPP_PAP"/>
</dbReference>
<dbReference type="InterPro" id="IPR039331">
    <property type="entry name" value="PPA-like"/>
</dbReference>
<dbReference type="InterPro" id="IPR008963">
    <property type="entry name" value="Purple_acid_Pase-like_N"/>
</dbReference>
<dbReference type="InterPro" id="IPR015914">
    <property type="entry name" value="Purple_acid_Pase_N"/>
</dbReference>
<dbReference type="InterPro" id="IPR025733">
    <property type="entry name" value="Purple_acid_PPase_C_dom"/>
</dbReference>
<dbReference type="PANTHER" id="PTHR22953">
    <property type="entry name" value="ACID PHOSPHATASE RELATED"/>
    <property type="match status" value="1"/>
</dbReference>
<dbReference type="PANTHER" id="PTHR22953:SF153">
    <property type="entry name" value="PURPLE ACID PHOSPHATASE"/>
    <property type="match status" value="1"/>
</dbReference>
<dbReference type="Pfam" id="PF00149">
    <property type="entry name" value="Metallophos"/>
    <property type="match status" value="1"/>
</dbReference>
<dbReference type="Pfam" id="PF14008">
    <property type="entry name" value="Metallophos_C"/>
    <property type="match status" value="1"/>
</dbReference>
<dbReference type="Pfam" id="PF16656">
    <property type="entry name" value="Pur_ac_phosph_N"/>
    <property type="match status" value="1"/>
</dbReference>
<dbReference type="PIRSF" id="PIRSF000900">
    <property type="entry name" value="Acid_Ptase_Asper"/>
    <property type="match status" value="1"/>
</dbReference>
<dbReference type="SUPFAM" id="SSF56300">
    <property type="entry name" value="Metallo-dependent phosphatases"/>
    <property type="match status" value="1"/>
</dbReference>
<dbReference type="SUPFAM" id="SSF49363">
    <property type="entry name" value="Purple acid phosphatase, N-terminal domain"/>
    <property type="match status" value="1"/>
</dbReference>
<dbReference type="PROSITE" id="PS50853">
    <property type="entry name" value="FN3"/>
    <property type="match status" value="1"/>
</dbReference>
<evidence type="ECO:0000255" key="1"/>
<evidence type="ECO:0000255" key="2">
    <source>
        <dbReference type="PROSITE-ProRule" id="PRU00316"/>
    </source>
</evidence>
<evidence type="ECO:0000269" key="3">
    <source>
    </source>
</evidence>
<evidence type="ECO:0000269" key="4">
    <source>
    </source>
</evidence>
<evidence type="ECO:0000305" key="5"/>
<protein>
    <recommendedName>
        <fullName>Acid phosphatase</fullName>
        <ecNumber>3.1.3.2</ecNumber>
    </recommendedName>
    <alternativeName>
        <fullName>APase6</fullName>
    </alternativeName>
    <alternativeName>
        <fullName>pH 6-optimum acid phosphatase</fullName>
    </alternativeName>
</protein>
<gene>
    <name type="primary">aphA</name>
</gene>
<sequence>MKGTAASALLVALSATAAQARPVVDERFPYTGPAVPIGDWVDPTINGNGKGFPRLVEPPAVKPATANPRNNVNVISLSYIPKGMHIHYQTPFGLGQLPAVRWGKDPRNLNSTAQGYSHTYDRTPSCSQVKAVTQCSQFFHEVSIDGLEPDTTYYYQIPAANGTTQSEVLSFKTSRPAGHPGSFSVAVLNDMGYTNAHGTHKQLVKAATEGTAFAWHGGDLSYADDWYSGILACADDWPVCYNGTSSTLPGGGPLPEEYKKPLPAGEIPDQGGPQGGDMSVLYESNWDLWQQWLNNVTLKIPYMVLPGNHEASCAEFDGPHNILTAYLNDDIANGTAPTDNLTYYSCPPSQRNFTAYQHRFRMPGPETGGVGNFWYSFDYGLAHFVSIDGETDFANSPEWNFAEDVTGNETLPSESETFITDSGPFGNVNGSVHETKSYEQWHWLQQDLAKVDRSKTPWVIVMSHRPMYSSAYSSYQLHVREAFEGLLLKYGVDAYLSGHIHWYERLYPLGANGTIDTAAIVNNNTYYAHNGKSITHIINGMAGNIESHSEFSDGEGLTNITALLDKVHYGFSKLTIFNETALKWELIRGDDGTVGDSLTLLKPSHVAGGKKLHS</sequence>
<name>PPA_ASPFI</name>
<organism>
    <name type="scientific">Aspergillus ficuum</name>
    <dbReference type="NCBI Taxonomy" id="5058"/>
    <lineage>
        <taxon>Eukaryota</taxon>
        <taxon>Fungi</taxon>
        <taxon>Dikarya</taxon>
        <taxon>Ascomycota</taxon>
        <taxon>Pezizomycotina</taxon>
        <taxon>Eurotiomycetes</taxon>
        <taxon>Eurotiomycetidae</taxon>
        <taxon>Eurotiales</taxon>
        <taxon>Aspergillaceae</taxon>
        <taxon>Aspergillus</taxon>
    </lineage>
</organism>